<dbReference type="EC" id="2.1.1.192" evidence="1"/>
<dbReference type="EMBL" id="CP000447">
    <property type="protein sequence ID" value="ABI70966.1"/>
    <property type="molecule type" value="Genomic_DNA"/>
</dbReference>
<dbReference type="RefSeq" id="WP_011636587.1">
    <property type="nucleotide sequence ID" value="NC_008345.1"/>
</dbReference>
<dbReference type="SMR" id="Q085U9"/>
<dbReference type="STRING" id="318167.Sfri_1113"/>
<dbReference type="KEGG" id="sfr:Sfri_1113"/>
<dbReference type="eggNOG" id="COG0820">
    <property type="taxonomic scope" value="Bacteria"/>
</dbReference>
<dbReference type="HOGENOM" id="CLU_029101_0_0_6"/>
<dbReference type="OrthoDB" id="9793973at2"/>
<dbReference type="Proteomes" id="UP000000684">
    <property type="component" value="Chromosome"/>
</dbReference>
<dbReference type="GO" id="GO:0005737">
    <property type="term" value="C:cytoplasm"/>
    <property type="evidence" value="ECO:0007669"/>
    <property type="project" value="UniProtKB-SubCell"/>
</dbReference>
<dbReference type="GO" id="GO:0051539">
    <property type="term" value="F:4 iron, 4 sulfur cluster binding"/>
    <property type="evidence" value="ECO:0007669"/>
    <property type="project" value="UniProtKB-UniRule"/>
</dbReference>
<dbReference type="GO" id="GO:0046872">
    <property type="term" value="F:metal ion binding"/>
    <property type="evidence" value="ECO:0007669"/>
    <property type="project" value="UniProtKB-KW"/>
</dbReference>
<dbReference type="GO" id="GO:0070040">
    <property type="term" value="F:rRNA (adenine(2503)-C2-)-methyltransferase activity"/>
    <property type="evidence" value="ECO:0007669"/>
    <property type="project" value="UniProtKB-UniRule"/>
</dbReference>
<dbReference type="GO" id="GO:0019843">
    <property type="term" value="F:rRNA binding"/>
    <property type="evidence" value="ECO:0007669"/>
    <property type="project" value="UniProtKB-UniRule"/>
</dbReference>
<dbReference type="GO" id="GO:0002935">
    <property type="term" value="F:tRNA (adenine(37)-C2)-methyltransferase activity"/>
    <property type="evidence" value="ECO:0007669"/>
    <property type="project" value="UniProtKB-UniRule"/>
</dbReference>
<dbReference type="GO" id="GO:0000049">
    <property type="term" value="F:tRNA binding"/>
    <property type="evidence" value="ECO:0007669"/>
    <property type="project" value="UniProtKB-UniRule"/>
</dbReference>
<dbReference type="GO" id="GO:0070475">
    <property type="term" value="P:rRNA base methylation"/>
    <property type="evidence" value="ECO:0007669"/>
    <property type="project" value="UniProtKB-UniRule"/>
</dbReference>
<dbReference type="GO" id="GO:0030488">
    <property type="term" value="P:tRNA methylation"/>
    <property type="evidence" value="ECO:0007669"/>
    <property type="project" value="UniProtKB-UniRule"/>
</dbReference>
<dbReference type="CDD" id="cd01335">
    <property type="entry name" value="Radical_SAM"/>
    <property type="match status" value="1"/>
</dbReference>
<dbReference type="FunFam" id="1.10.150.530:FF:000003">
    <property type="entry name" value="Dual-specificity RNA methyltransferase RlmN"/>
    <property type="match status" value="1"/>
</dbReference>
<dbReference type="FunFam" id="3.20.20.70:FF:000008">
    <property type="entry name" value="Dual-specificity RNA methyltransferase RlmN"/>
    <property type="match status" value="1"/>
</dbReference>
<dbReference type="Gene3D" id="1.10.150.530">
    <property type="match status" value="1"/>
</dbReference>
<dbReference type="Gene3D" id="3.20.20.70">
    <property type="entry name" value="Aldolase class I"/>
    <property type="match status" value="1"/>
</dbReference>
<dbReference type="HAMAP" id="MF_01849">
    <property type="entry name" value="RNA_methyltr_RlmN"/>
    <property type="match status" value="1"/>
</dbReference>
<dbReference type="InterPro" id="IPR013785">
    <property type="entry name" value="Aldolase_TIM"/>
</dbReference>
<dbReference type="InterPro" id="IPR040072">
    <property type="entry name" value="Methyltransferase_A"/>
</dbReference>
<dbReference type="InterPro" id="IPR048641">
    <property type="entry name" value="RlmN_N"/>
</dbReference>
<dbReference type="InterPro" id="IPR027492">
    <property type="entry name" value="RNA_MTrfase_RlmN"/>
</dbReference>
<dbReference type="InterPro" id="IPR004383">
    <property type="entry name" value="rRNA_lsu_MTrfase_RlmN/Cfr"/>
</dbReference>
<dbReference type="InterPro" id="IPR007197">
    <property type="entry name" value="rSAM"/>
</dbReference>
<dbReference type="NCBIfam" id="NF008396">
    <property type="entry name" value="PRK11194.1"/>
    <property type="match status" value="1"/>
</dbReference>
<dbReference type="NCBIfam" id="TIGR00048">
    <property type="entry name" value="rRNA_mod_RlmN"/>
    <property type="match status" value="1"/>
</dbReference>
<dbReference type="PANTHER" id="PTHR30544">
    <property type="entry name" value="23S RRNA METHYLTRANSFERASE"/>
    <property type="match status" value="1"/>
</dbReference>
<dbReference type="PANTHER" id="PTHR30544:SF5">
    <property type="entry name" value="RADICAL SAM CORE DOMAIN-CONTAINING PROTEIN"/>
    <property type="match status" value="1"/>
</dbReference>
<dbReference type="Pfam" id="PF04055">
    <property type="entry name" value="Radical_SAM"/>
    <property type="match status" value="1"/>
</dbReference>
<dbReference type="Pfam" id="PF21016">
    <property type="entry name" value="RlmN_N"/>
    <property type="match status" value="1"/>
</dbReference>
<dbReference type="PIRSF" id="PIRSF006004">
    <property type="entry name" value="CHP00048"/>
    <property type="match status" value="1"/>
</dbReference>
<dbReference type="SFLD" id="SFLDF00275">
    <property type="entry name" value="adenosine_C2_methyltransferase"/>
    <property type="match status" value="1"/>
</dbReference>
<dbReference type="SFLD" id="SFLDS00029">
    <property type="entry name" value="Radical_SAM"/>
    <property type="match status" value="1"/>
</dbReference>
<dbReference type="SUPFAM" id="SSF102114">
    <property type="entry name" value="Radical SAM enzymes"/>
    <property type="match status" value="1"/>
</dbReference>
<dbReference type="PROSITE" id="PS51918">
    <property type="entry name" value="RADICAL_SAM"/>
    <property type="match status" value="1"/>
</dbReference>
<gene>
    <name evidence="1" type="primary">rlmN</name>
    <name type="ordered locus">Sfri_1113</name>
</gene>
<comment type="function">
    <text evidence="1">Specifically methylates position 2 of adenine 2503 in 23S rRNA and position 2 of adenine 37 in tRNAs. m2A2503 modification seems to play a crucial role in the proofreading step occurring at the peptidyl transferase center and thus would serve to optimize ribosomal fidelity.</text>
</comment>
<comment type="catalytic activity">
    <reaction evidence="1">
        <text>adenosine(2503) in 23S rRNA + 2 reduced [2Fe-2S]-[ferredoxin] + 2 S-adenosyl-L-methionine = 2-methyladenosine(2503) in 23S rRNA + 5'-deoxyadenosine + L-methionine + 2 oxidized [2Fe-2S]-[ferredoxin] + S-adenosyl-L-homocysteine</text>
        <dbReference type="Rhea" id="RHEA:42916"/>
        <dbReference type="Rhea" id="RHEA-COMP:10000"/>
        <dbReference type="Rhea" id="RHEA-COMP:10001"/>
        <dbReference type="Rhea" id="RHEA-COMP:10152"/>
        <dbReference type="Rhea" id="RHEA-COMP:10282"/>
        <dbReference type="ChEBI" id="CHEBI:17319"/>
        <dbReference type="ChEBI" id="CHEBI:33737"/>
        <dbReference type="ChEBI" id="CHEBI:33738"/>
        <dbReference type="ChEBI" id="CHEBI:57844"/>
        <dbReference type="ChEBI" id="CHEBI:57856"/>
        <dbReference type="ChEBI" id="CHEBI:59789"/>
        <dbReference type="ChEBI" id="CHEBI:74411"/>
        <dbReference type="ChEBI" id="CHEBI:74497"/>
        <dbReference type="EC" id="2.1.1.192"/>
    </reaction>
</comment>
<comment type="catalytic activity">
    <reaction evidence="1">
        <text>adenosine(37) in tRNA + 2 reduced [2Fe-2S]-[ferredoxin] + 2 S-adenosyl-L-methionine = 2-methyladenosine(37) in tRNA + 5'-deoxyadenosine + L-methionine + 2 oxidized [2Fe-2S]-[ferredoxin] + S-adenosyl-L-homocysteine</text>
        <dbReference type="Rhea" id="RHEA:43332"/>
        <dbReference type="Rhea" id="RHEA-COMP:10000"/>
        <dbReference type="Rhea" id="RHEA-COMP:10001"/>
        <dbReference type="Rhea" id="RHEA-COMP:10162"/>
        <dbReference type="Rhea" id="RHEA-COMP:10485"/>
        <dbReference type="ChEBI" id="CHEBI:17319"/>
        <dbReference type="ChEBI" id="CHEBI:33737"/>
        <dbReference type="ChEBI" id="CHEBI:33738"/>
        <dbReference type="ChEBI" id="CHEBI:57844"/>
        <dbReference type="ChEBI" id="CHEBI:57856"/>
        <dbReference type="ChEBI" id="CHEBI:59789"/>
        <dbReference type="ChEBI" id="CHEBI:74411"/>
        <dbReference type="ChEBI" id="CHEBI:74497"/>
        <dbReference type="EC" id="2.1.1.192"/>
    </reaction>
</comment>
<comment type="cofactor">
    <cofactor evidence="1">
        <name>[4Fe-4S] cluster</name>
        <dbReference type="ChEBI" id="CHEBI:49883"/>
    </cofactor>
    <text evidence="1">Binds 1 [4Fe-4S] cluster. The cluster is coordinated with 3 cysteines and an exchangeable S-adenosyl-L-methionine.</text>
</comment>
<comment type="subcellular location">
    <subcellularLocation>
        <location evidence="1">Cytoplasm</location>
    </subcellularLocation>
</comment>
<comment type="miscellaneous">
    <text evidence="1">Reaction proceeds by a ping-pong mechanism involving intermediate methylation of a conserved cysteine residue.</text>
</comment>
<comment type="similarity">
    <text evidence="1">Belongs to the radical SAM superfamily. RlmN family.</text>
</comment>
<protein>
    <recommendedName>
        <fullName evidence="1">Dual-specificity RNA methyltransferase RlmN</fullName>
        <ecNumber evidence="1">2.1.1.192</ecNumber>
    </recommendedName>
    <alternativeName>
        <fullName evidence="1">23S rRNA (adenine(2503)-C(2))-methyltransferase</fullName>
    </alternativeName>
    <alternativeName>
        <fullName evidence="1">23S rRNA m2A2503 methyltransferase</fullName>
    </alternativeName>
    <alternativeName>
        <fullName evidence="1">Ribosomal RNA large subunit methyltransferase N</fullName>
    </alternativeName>
    <alternativeName>
        <fullName evidence="1">tRNA (adenine(37)-C(2))-methyltransferase</fullName>
    </alternativeName>
    <alternativeName>
        <fullName evidence="1">tRNA m2A37 methyltransferase</fullName>
    </alternativeName>
</protein>
<proteinExistence type="inferred from homology"/>
<sequence>MSVKKINLLDLDRKGLRALFSEMGEKPFRADQLMKWVYHFGVTDFEEMNNINKVLRTKLAAKCEIVAPEIASFQKSNDGTIKFAINVGQGQEVETVYIPEEDRATLCVSSQVGCALECTFCSTGQQGFNRNLTVSEIIGQVWRVSQFLGFHKDTGDRPISNVVMMGMGEPLLNLANVIPAMDIMLDDFGFSLSKRRVTLSTSGVVPALDKLGDAIDVALAVSIHAPNDELRDVLVPVNKKYPLQEFLAGIRRYLEKSNANRGRVTVEYVMLDHINDSTDQAHELAILMKDTPCKINLIPFNPYPGSPYGRSSNSRIDRFSKVLMEHGLTVIVRKTRGDDIDAACGQLAGDIRDRTKRLAKKQMQQNQISVTME</sequence>
<feature type="chain" id="PRO_0000350397" description="Dual-specificity RNA methyltransferase RlmN">
    <location>
        <begin position="1"/>
        <end position="373"/>
    </location>
</feature>
<feature type="domain" description="Radical SAM core" evidence="2">
    <location>
        <begin position="100"/>
        <end position="339"/>
    </location>
</feature>
<feature type="active site" description="Proton acceptor" evidence="1">
    <location>
        <position position="94"/>
    </location>
</feature>
<feature type="active site" description="S-methylcysteine intermediate" evidence="1">
    <location>
        <position position="344"/>
    </location>
</feature>
<feature type="binding site" evidence="1">
    <location>
        <position position="114"/>
    </location>
    <ligand>
        <name>[4Fe-4S] cluster</name>
        <dbReference type="ChEBI" id="CHEBI:49883"/>
        <note>4Fe-4S-S-AdoMet</note>
    </ligand>
</feature>
<feature type="binding site" evidence="1">
    <location>
        <position position="118"/>
    </location>
    <ligand>
        <name>[4Fe-4S] cluster</name>
        <dbReference type="ChEBI" id="CHEBI:49883"/>
        <note>4Fe-4S-S-AdoMet</note>
    </ligand>
</feature>
<feature type="binding site" evidence="1">
    <location>
        <position position="121"/>
    </location>
    <ligand>
        <name>[4Fe-4S] cluster</name>
        <dbReference type="ChEBI" id="CHEBI:49883"/>
        <note>4Fe-4S-S-AdoMet</note>
    </ligand>
</feature>
<feature type="binding site" evidence="1">
    <location>
        <begin position="168"/>
        <end position="169"/>
    </location>
    <ligand>
        <name>S-adenosyl-L-methionine</name>
        <dbReference type="ChEBI" id="CHEBI:59789"/>
    </ligand>
</feature>
<feature type="binding site" evidence="1">
    <location>
        <position position="200"/>
    </location>
    <ligand>
        <name>S-adenosyl-L-methionine</name>
        <dbReference type="ChEBI" id="CHEBI:59789"/>
    </ligand>
</feature>
<feature type="binding site" evidence="1">
    <location>
        <begin position="222"/>
        <end position="224"/>
    </location>
    <ligand>
        <name>S-adenosyl-L-methionine</name>
        <dbReference type="ChEBI" id="CHEBI:59789"/>
    </ligand>
</feature>
<feature type="binding site" evidence="1">
    <location>
        <position position="301"/>
    </location>
    <ligand>
        <name>S-adenosyl-L-methionine</name>
        <dbReference type="ChEBI" id="CHEBI:59789"/>
    </ligand>
</feature>
<feature type="disulfide bond" description="(transient)" evidence="1">
    <location>
        <begin position="107"/>
        <end position="344"/>
    </location>
</feature>
<reference key="1">
    <citation type="submission" date="2006-08" db="EMBL/GenBank/DDBJ databases">
        <title>Complete sequence of Shewanella frigidimarina NCIMB 400.</title>
        <authorList>
            <consortium name="US DOE Joint Genome Institute"/>
            <person name="Copeland A."/>
            <person name="Lucas S."/>
            <person name="Lapidus A."/>
            <person name="Barry K."/>
            <person name="Detter J.C."/>
            <person name="Glavina del Rio T."/>
            <person name="Hammon N."/>
            <person name="Israni S."/>
            <person name="Dalin E."/>
            <person name="Tice H."/>
            <person name="Pitluck S."/>
            <person name="Fredrickson J.K."/>
            <person name="Kolker E."/>
            <person name="McCuel L.A."/>
            <person name="DiChristina T."/>
            <person name="Nealson K.H."/>
            <person name="Newman D."/>
            <person name="Tiedje J.M."/>
            <person name="Zhou J."/>
            <person name="Romine M.F."/>
            <person name="Culley D.E."/>
            <person name="Serres M."/>
            <person name="Chertkov O."/>
            <person name="Brettin T."/>
            <person name="Bruce D."/>
            <person name="Han C."/>
            <person name="Tapia R."/>
            <person name="Gilna P."/>
            <person name="Schmutz J."/>
            <person name="Larimer F."/>
            <person name="Land M."/>
            <person name="Hauser L."/>
            <person name="Kyrpides N."/>
            <person name="Mikhailova N."/>
            <person name="Richardson P."/>
        </authorList>
    </citation>
    <scope>NUCLEOTIDE SEQUENCE [LARGE SCALE GENOMIC DNA]</scope>
    <source>
        <strain>NCIMB 400</strain>
    </source>
</reference>
<evidence type="ECO:0000255" key="1">
    <source>
        <dbReference type="HAMAP-Rule" id="MF_01849"/>
    </source>
</evidence>
<evidence type="ECO:0000255" key="2">
    <source>
        <dbReference type="PROSITE-ProRule" id="PRU01266"/>
    </source>
</evidence>
<name>RLMN_SHEFN</name>
<keyword id="KW-0004">4Fe-4S</keyword>
<keyword id="KW-0963">Cytoplasm</keyword>
<keyword id="KW-1015">Disulfide bond</keyword>
<keyword id="KW-0408">Iron</keyword>
<keyword id="KW-0411">Iron-sulfur</keyword>
<keyword id="KW-0479">Metal-binding</keyword>
<keyword id="KW-0489">Methyltransferase</keyword>
<keyword id="KW-1185">Reference proteome</keyword>
<keyword id="KW-0698">rRNA processing</keyword>
<keyword id="KW-0949">S-adenosyl-L-methionine</keyword>
<keyword id="KW-0808">Transferase</keyword>
<keyword id="KW-0819">tRNA processing</keyword>
<accession>Q085U9</accession>
<organism>
    <name type="scientific">Shewanella frigidimarina (strain NCIMB 400)</name>
    <dbReference type="NCBI Taxonomy" id="318167"/>
    <lineage>
        <taxon>Bacteria</taxon>
        <taxon>Pseudomonadati</taxon>
        <taxon>Pseudomonadota</taxon>
        <taxon>Gammaproteobacteria</taxon>
        <taxon>Alteromonadales</taxon>
        <taxon>Shewanellaceae</taxon>
        <taxon>Shewanella</taxon>
    </lineage>
</organism>